<proteinExistence type="evidence at protein level"/>
<protein>
    <recommendedName>
        <fullName>Ubiquitin-conjugating enzyme E2 1</fullName>
        <ecNumber>2.3.2.23</ecNumber>
    </recommendedName>
    <alternativeName>
        <fullName>E2 ubiquitin-conjugating enzyme 1</fullName>
    </alternativeName>
    <alternativeName>
        <fullName>Ubiquitin carrier protein 1</fullName>
    </alternativeName>
    <alternativeName>
        <fullName>Ubiquitin-protein ligase 1</fullName>
    </alternativeName>
</protein>
<dbReference type="EC" id="2.3.2.23"/>
<dbReference type="EMBL" id="U08139">
    <property type="protein sequence ID" value="AAA83388.1"/>
    <property type="molecule type" value="Genomic_DNA"/>
</dbReference>
<dbReference type="EMBL" id="FO080784">
    <property type="protein sequence ID" value="CCD66736.1"/>
    <property type="molecule type" value="Genomic_DNA"/>
</dbReference>
<dbReference type="PIR" id="T32959">
    <property type="entry name" value="T32959"/>
</dbReference>
<dbReference type="RefSeq" id="NP_001379774.1">
    <property type="nucleotide sequence ID" value="NM_001392291.1"/>
</dbReference>
<dbReference type="RefSeq" id="NP_500480.1">
    <property type="nucleotide sequence ID" value="NM_068079.5"/>
</dbReference>
<dbReference type="PDB" id="1Q34">
    <property type="method" value="X-ray"/>
    <property type="resolution" value="2.90 A"/>
    <property type="chains" value="A/B/C=1-163"/>
</dbReference>
<dbReference type="PDB" id="1Z3D">
    <property type="method" value="X-ray"/>
    <property type="resolution" value="2.50 A"/>
    <property type="chains" value="A=1-154"/>
</dbReference>
<dbReference type="PDBsum" id="1Q34"/>
<dbReference type="PDBsum" id="1Z3D"/>
<dbReference type="SMR" id="P52478"/>
<dbReference type="BioGRID" id="42306">
    <property type="interactions" value="18"/>
</dbReference>
<dbReference type="DIP" id="DIP-24573N"/>
<dbReference type="FunCoup" id="P52478">
    <property type="interactions" value="2891"/>
</dbReference>
<dbReference type="IntAct" id="P52478">
    <property type="interactions" value="8"/>
</dbReference>
<dbReference type="MINT" id="P52478"/>
<dbReference type="STRING" id="6239.C35B1.1.1"/>
<dbReference type="PaxDb" id="6239-C35B1.1"/>
<dbReference type="PeptideAtlas" id="P52478"/>
<dbReference type="EnsemblMetazoa" id="C35B1.1.1">
    <property type="protein sequence ID" value="C35B1.1.1"/>
    <property type="gene ID" value="WBGene00006701"/>
</dbReference>
<dbReference type="GeneID" id="177170"/>
<dbReference type="UCSC" id="C35B1.1">
    <property type="organism name" value="c. elegans"/>
</dbReference>
<dbReference type="AGR" id="WB:WBGene00006701"/>
<dbReference type="WormBase" id="C35B1.1">
    <property type="protein sequence ID" value="CE27822"/>
    <property type="gene ID" value="WBGene00006701"/>
    <property type="gene designation" value="ubc-1"/>
</dbReference>
<dbReference type="eggNOG" id="KOG0419">
    <property type="taxonomic scope" value="Eukaryota"/>
</dbReference>
<dbReference type="GeneTree" id="ENSGT00940000174704"/>
<dbReference type="HOGENOM" id="CLU_030988_10_2_1"/>
<dbReference type="InParanoid" id="P52478"/>
<dbReference type="OMA" id="DHKSQYI"/>
<dbReference type="OrthoDB" id="9984419at2759"/>
<dbReference type="PhylomeDB" id="P52478"/>
<dbReference type="Reactome" id="R-CEL-8866652">
    <property type="pathway name" value="Synthesis of active ubiquitin: roles of E1 and E2 enzymes"/>
</dbReference>
<dbReference type="Reactome" id="R-CEL-983168">
    <property type="pathway name" value="Antigen processing: Ubiquitination &amp; Proteasome degradation"/>
</dbReference>
<dbReference type="UniPathway" id="UPA00143"/>
<dbReference type="EvolutionaryTrace" id="P52478"/>
<dbReference type="PRO" id="PR:P52478"/>
<dbReference type="Proteomes" id="UP000001940">
    <property type="component" value="Chromosome IV"/>
</dbReference>
<dbReference type="Bgee" id="WBGene00006701">
    <property type="expression patterns" value="Expressed in pharyngeal muscle cell (C elegans) and 4 other cell types or tissues"/>
</dbReference>
<dbReference type="GO" id="GO:0033503">
    <property type="term" value="C:HULC complex"/>
    <property type="evidence" value="ECO:0000318"/>
    <property type="project" value="GO_Central"/>
</dbReference>
<dbReference type="GO" id="GO:0031371">
    <property type="term" value="C:ubiquitin conjugating enzyme complex"/>
    <property type="evidence" value="ECO:0000314"/>
    <property type="project" value="WormBase"/>
</dbReference>
<dbReference type="GO" id="GO:0005524">
    <property type="term" value="F:ATP binding"/>
    <property type="evidence" value="ECO:0007669"/>
    <property type="project" value="UniProtKB-KW"/>
</dbReference>
<dbReference type="GO" id="GO:0061631">
    <property type="term" value="F:ubiquitin conjugating enzyme activity"/>
    <property type="evidence" value="ECO:0000314"/>
    <property type="project" value="WormBase"/>
</dbReference>
<dbReference type="GO" id="GO:0031625">
    <property type="term" value="F:ubiquitin protein ligase binding"/>
    <property type="evidence" value="ECO:0000353"/>
    <property type="project" value="WormBase"/>
</dbReference>
<dbReference type="GO" id="GO:0006281">
    <property type="term" value="P:DNA repair"/>
    <property type="evidence" value="ECO:0000314"/>
    <property type="project" value="WormBase"/>
</dbReference>
<dbReference type="GO" id="GO:0043161">
    <property type="term" value="P:proteasome-mediated ubiquitin-dependent protein catabolic process"/>
    <property type="evidence" value="ECO:0000318"/>
    <property type="project" value="GO_Central"/>
</dbReference>
<dbReference type="GO" id="GO:0000209">
    <property type="term" value="P:protein polyubiquitination"/>
    <property type="evidence" value="ECO:0000318"/>
    <property type="project" value="GO_Central"/>
</dbReference>
<dbReference type="GO" id="GO:0016567">
    <property type="term" value="P:protein ubiquitination"/>
    <property type="evidence" value="ECO:0000314"/>
    <property type="project" value="WormBase"/>
</dbReference>
<dbReference type="CDD" id="cd23790">
    <property type="entry name" value="UBCc_UBE2A_2B"/>
    <property type="match status" value="1"/>
</dbReference>
<dbReference type="FunFam" id="3.10.110.10:FF:000004">
    <property type="entry name" value="Ubiquitin-conjugating enzyme E2 A"/>
    <property type="match status" value="1"/>
</dbReference>
<dbReference type="Gene3D" id="3.10.110.10">
    <property type="entry name" value="Ubiquitin Conjugating Enzyme"/>
    <property type="match status" value="1"/>
</dbReference>
<dbReference type="InterPro" id="IPR050113">
    <property type="entry name" value="Ub_conjugating_enzyme"/>
</dbReference>
<dbReference type="InterPro" id="IPR000608">
    <property type="entry name" value="UBQ-conjugat_E2_core"/>
</dbReference>
<dbReference type="InterPro" id="IPR023313">
    <property type="entry name" value="UBQ-conjugating_AS"/>
</dbReference>
<dbReference type="InterPro" id="IPR016135">
    <property type="entry name" value="UBQ-conjugating_enzyme/RWD"/>
</dbReference>
<dbReference type="PANTHER" id="PTHR24067">
    <property type="entry name" value="UBIQUITIN-CONJUGATING ENZYME E2"/>
    <property type="match status" value="1"/>
</dbReference>
<dbReference type="Pfam" id="PF00179">
    <property type="entry name" value="UQ_con"/>
    <property type="match status" value="1"/>
</dbReference>
<dbReference type="SMART" id="SM00212">
    <property type="entry name" value="UBCc"/>
    <property type="match status" value="1"/>
</dbReference>
<dbReference type="SUPFAM" id="SSF54495">
    <property type="entry name" value="UBC-like"/>
    <property type="match status" value="1"/>
</dbReference>
<dbReference type="PROSITE" id="PS00183">
    <property type="entry name" value="UBC_1"/>
    <property type="match status" value="1"/>
</dbReference>
<dbReference type="PROSITE" id="PS50127">
    <property type="entry name" value="UBC_2"/>
    <property type="match status" value="1"/>
</dbReference>
<reference key="1">
    <citation type="journal article" date="1995" name="DNA Cell Biol.">
        <title>Caenorhabditis elegans UBC-1, a ubiquitin-conjugating enzyme homologous to yeast RAD6/UBC2, contains a novel carboxy-terminal extension that is conserved in nematodes.</title>
        <authorList>
            <person name="Leggett D.S."/>
            <person name="Jones D."/>
            <person name="Candido E.P.M."/>
        </authorList>
    </citation>
    <scope>NUCLEOTIDE SEQUENCE [GENOMIC DNA]</scope>
    <source>
        <strain>Bristol N2</strain>
    </source>
</reference>
<reference key="2">
    <citation type="journal article" date="1998" name="Science">
        <title>Genome sequence of the nematode C. elegans: a platform for investigating biology.</title>
        <authorList>
            <consortium name="The C. elegans sequencing consortium"/>
        </authorList>
    </citation>
    <scope>NUCLEOTIDE SEQUENCE [LARGE SCALE GENOMIC DNA]</scope>
    <source>
        <strain>Bristol N2</strain>
    </source>
</reference>
<reference key="3">
    <citation type="journal article" date="2004" name="Biochem. Biophys. Res. Commun.">
        <title>Interactions within the ubiquitin pathway of Caenorhabditis elegans.</title>
        <authorList>
            <person name="Gudgen M."/>
            <person name="Chandrasekaran A."/>
            <person name="Frazier T."/>
            <person name="Boyd L."/>
        </authorList>
    </citation>
    <scope>INTERACTION WITH UBC-13</scope>
</reference>
<reference key="4">
    <citation type="journal article" date="2004" name="Dev. Biol.">
        <title>Characterization of C. elegans RING finger protein 1, a binding partner of ubiquitin-conjugating enzyme 1.</title>
        <authorList>
            <person name="Crowe E."/>
            <person name="Candido E.P.M."/>
        </authorList>
    </citation>
    <scope>INTERACTION WITH UBR-1 AND RFP-1</scope>
    <scope>DISRUPTION PHENOTYPE</scope>
</reference>
<gene>
    <name type="primary">ubc-1</name>
    <name type="ORF">C35B1.1</name>
</gene>
<organism>
    <name type="scientific">Caenorhabditis elegans</name>
    <dbReference type="NCBI Taxonomy" id="6239"/>
    <lineage>
        <taxon>Eukaryota</taxon>
        <taxon>Metazoa</taxon>
        <taxon>Ecdysozoa</taxon>
        <taxon>Nematoda</taxon>
        <taxon>Chromadorea</taxon>
        <taxon>Rhabditida</taxon>
        <taxon>Rhabditina</taxon>
        <taxon>Rhabditomorpha</taxon>
        <taxon>Rhabditoidea</taxon>
        <taxon>Rhabditidae</taxon>
        <taxon>Peloderinae</taxon>
        <taxon>Caenorhabditis</taxon>
    </lineage>
</organism>
<accession>P52478</accession>
<accession>O45062</accession>
<keyword id="KW-0002">3D-structure</keyword>
<keyword id="KW-0067">ATP-binding</keyword>
<keyword id="KW-0547">Nucleotide-binding</keyword>
<keyword id="KW-1185">Reference proteome</keyword>
<keyword id="KW-0808">Transferase</keyword>
<keyword id="KW-0833">Ubl conjugation pathway</keyword>
<sequence length="192" mass="21513">MTTPSRRRLMRDFKKLQEDPPAGVSGAPTEDNILTWEAIIFGPQETPFEDGTFKLSLEFTEEYPNKPPTVKFISKMFHPNVYADGSICLDILQNRWSPTYDVAAILTSIQSLLDEPNPNSPANSLAAQLYQENRREYEKRVQQIVEQSWLNFGENEGDAVLKDDVEIEEIAAPGANDADDDRMDEGASGSNA</sequence>
<name>UBC1_CAEEL</name>
<comment type="function">
    <text>Catalyzes the covalent attachment of ubiquitin to other proteins.</text>
</comment>
<comment type="catalytic activity">
    <reaction evidence="1 6">
        <text>S-ubiquitinyl-[E1 ubiquitin-activating enzyme]-L-cysteine + [E2 ubiquitin-conjugating enzyme]-L-cysteine = [E1 ubiquitin-activating enzyme]-L-cysteine + S-ubiquitinyl-[E2 ubiquitin-conjugating enzyme]-L-cysteine.</text>
        <dbReference type="EC" id="2.3.2.23"/>
    </reaction>
</comment>
<comment type="pathway">
    <text evidence="1">Protein modification; protein ubiquitination.</text>
</comment>
<comment type="subunit">
    <text evidence="4 5">Interacts with ubr-1 and rfp-1 (PubMed:14732404). Interacts with ubc-13 (PubMed:15530417).</text>
</comment>
<comment type="interaction">
    <interactant intactId="EBI-316677">
        <id>P52478</id>
    </interactant>
    <interactant intactId="EBI-316712">
        <id>P34537</id>
        <label>rfp-1</label>
    </interactant>
    <organismsDiffer>false</organismsDiffer>
    <experiments>7</experiments>
</comment>
<comment type="disruption phenotype">
    <text evidence="4">Worms are viable, fertile, and do not show any obvious anomaly.</text>
</comment>
<comment type="similarity">
    <text evidence="1">Belongs to the ubiquitin-conjugating enzyme family.</text>
</comment>
<feature type="chain" id="PRO_0000082514" description="Ubiquitin-conjugating enzyme E2 1">
    <location>
        <begin position="1"/>
        <end position="192"/>
    </location>
</feature>
<feature type="domain" description="UBC core" evidence="1">
    <location>
        <begin position="4"/>
        <end position="150"/>
    </location>
</feature>
<feature type="region of interest" description="Disordered" evidence="3">
    <location>
        <begin position="1"/>
        <end position="28"/>
    </location>
</feature>
<feature type="region of interest" description="Disordered" evidence="3">
    <location>
        <begin position="171"/>
        <end position="192"/>
    </location>
</feature>
<feature type="active site" description="Glycyl thioester intermediate" evidence="1 2">
    <location>
        <position position="88"/>
    </location>
</feature>
<feature type="helix" evidence="8">
    <location>
        <begin position="4"/>
        <end position="18"/>
    </location>
</feature>
<feature type="strand" evidence="8">
    <location>
        <begin position="24"/>
        <end position="29"/>
    </location>
</feature>
<feature type="strand" evidence="8">
    <location>
        <begin position="32"/>
        <end position="41"/>
    </location>
</feature>
<feature type="strand" evidence="7">
    <location>
        <begin position="44"/>
        <end position="46"/>
    </location>
</feature>
<feature type="turn" evidence="8">
    <location>
        <begin position="47"/>
        <end position="50"/>
    </location>
</feature>
<feature type="strand" evidence="8">
    <location>
        <begin position="52"/>
        <end position="58"/>
    </location>
</feature>
<feature type="turn" evidence="8">
    <location>
        <begin position="61"/>
        <end position="65"/>
    </location>
</feature>
<feature type="strand" evidence="8">
    <location>
        <begin position="69"/>
        <end position="74"/>
    </location>
</feature>
<feature type="strand" evidence="7">
    <location>
        <begin position="85"/>
        <end position="87"/>
    </location>
</feature>
<feature type="helix" evidence="8">
    <location>
        <begin position="90"/>
        <end position="92"/>
    </location>
</feature>
<feature type="turn" evidence="7">
    <location>
        <begin position="93"/>
        <end position="95"/>
    </location>
</feature>
<feature type="helix" evidence="8">
    <location>
        <begin position="102"/>
        <end position="111"/>
    </location>
</feature>
<feature type="helix" evidence="8">
    <location>
        <begin position="124"/>
        <end position="132"/>
    </location>
</feature>
<feature type="helix" evidence="8">
    <location>
        <begin position="134"/>
        <end position="148"/>
    </location>
</feature>
<feature type="turn" evidence="8">
    <location>
        <begin position="149"/>
        <end position="151"/>
    </location>
</feature>
<evidence type="ECO:0000255" key="1">
    <source>
        <dbReference type="PROSITE-ProRule" id="PRU00388"/>
    </source>
</evidence>
<evidence type="ECO:0000255" key="2">
    <source>
        <dbReference type="PROSITE-ProRule" id="PRU10133"/>
    </source>
</evidence>
<evidence type="ECO:0000256" key="3">
    <source>
        <dbReference type="SAM" id="MobiDB-lite"/>
    </source>
</evidence>
<evidence type="ECO:0000269" key="4">
    <source>
    </source>
</evidence>
<evidence type="ECO:0000269" key="5">
    <source>
    </source>
</evidence>
<evidence type="ECO:0000305" key="6"/>
<evidence type="ECO:0007829" key="7">
    <source>
        <dbReference type="PDB" id="1Q34"/>
    </source>
</evidence>
<evidence type="ECO:0007829" key="8">
    <source>
        <dbReference type="PDB" id="1Z3D"/>
    </source>
</evidence>